<proteinExistence type="inferred from homology"/>
<evidence type="ECO:0000255" key="1">
    <source>
        <dbReference type="HAMAP-Rule" id="MF_01347"/>
    </source>
</evidence>
<dbReference type="EC" id="7.1.2.2" evidence="1"/>
<dbReference type="EMBL" id="AE004439">
    <property type="protein sequence ID" value="AAK03578.1"/>
    <property type="molecule type" value="Genomic_DNA"/>
</dbReference>
<dbReference type="RefSeq" id="WP_005724211.1">
    <property type="nucleotide sequence ID" value="NC_002663.1"/>
</dbReference>
<dbReference type="SMR" id="Q9CKW1"/>
<dbReference type="STRING" id="272843.PM1494"/>
<dbReference type="EnsemblBacteria" id="AAK03578">
    <property type="protein sequence ID" value="AAK03578"/>
    <property type="gene ID" value="PM1494"/>
</dbReference>
<dbReference type="GeneID" id="77206946"/>
<dbReference type="KEGG" id="pmu:PM1494"/>
<dbReference type="HOGENOM" id="CLU_022398_0_2_6"/>
<dbReference type="OrthoDB" id="9801639at2"/>
<dbReference type="Proteomes" id="UP000000809">
    <property type="component" value="Chromosome"/>
</dbReference>
<dbReference type="GO" id="GO:0005886">
    <property type="term" value="C:plasma membrane"/>
    <property type="evidence" value="ECO:0007669"/>
    <property type="project" value="UniProtKB-SubCell"/>
</dbReference>
<dbReference type="GO" id="GO:0045259">
    <property type="term" value="C:proton-transporting ATP synthase complex"/>
    <property type="evidence" value="ECO:0007669"/>
    <property type="project" value="UniProtKB-KW"/>
</dbReference>
<dbReference type="GO" id="GO:0005524">
    <property type="term" value="F:ATP binding"/>
    <property type="evidence" value="ECO:0007669"/>
    <property type="project" value="UniProtKB-UniRule"/>
</dbReference>
<dbReference type="GO" id="GO:0016887">
    <property type="term" value="F:ATP hydrolysis activity"/>
    <property type="evidence" value="ECO:0007669"/>
    <property type="project" value="InterPro"/>
</dbReference>
<dbReference type="GO" id="GO:0046933">
    <property type="term" value="F:proton-transporting ATP synthase activity, rotational mechanism"/>
    <property type="evidence" value="ECO:0007669"/>
    <property type="project" value="UniProtKB-UniRule"/>
</dbReference>
<dbReference type="CDD" id="cd18110">
    <property type="entry name" value="ATP-synt_F1_beta_C"/>
    <property type="match status" value="1"/>
</dbReference>
<dbReference type="CDD" id="cd18115">
    <property type="entry name" value="ATP-synt_F1_beta_N"/>
    <property type="match status" value="1"/>
</dbReference>
<dbReference type="CDD" id="cd01133">
    <property type="entry name" value="F1-ATPase_beta_CD"/>
    <property type="match status" value="1"/>
</dbReference>
<dbReference type="FunFam" id="1.10.1140.10:FF:000001">
    <property type="entry name" value="ATP synthase subunit beta"/>
    <property type="match status" value="1"/>
</dbReference>
<dbReference type="FunFam" id="2.40.10.170:FF:000003">
    <property type="entry name" value="ATP synthase subunit beta"/>
    <property type="match status" value="1"/>
</dbReference>
<dbReference type="FunFam" id="3.40.50.300:FF:000004">
    <property type="entry name" value="ATP synthase subunit beta"/>
    <property type="match status" value="1"/>
</dbReference>
<dbReference type="Gene3D" id="2.40.10.170">
    <property type="match status" value="1"/>
</dbReference>
<dbReference type="Gene3D" id="1.10.1140.10">
    <property type="entry name" value="Bovine Mitochondrial F1-atpase, Atp Synthase Beta Chain, Chain D, domain 3"/>
    <property type="match status" value="1"/>
</dbReference>
<dbReference type="Gene3D" id="3.40.50.300">
    <property type="entry name" value="P-loop containing nucleotide triphosphate hydrolases"/>
    <property type="match status" value="1"/>
</dbReference>
<dbReference type="HAMAP" id="MF_01347">
    <property type="entry name" value="ATP_synth_beta_bact"/>
    <property type="match status" value="1"/>
</dbReference>
<dbReference type="InterPro" id="IPR003593">
    <property type="entry name" value="AAA+_ATPase"/>
</dbReference>
<dbReference type="InterPro" id="IPR055190">
    <property type="entry name" value="ATP-synt_VA_C"/>
</dbReference>
<dbReference type="InterPro" id="IPR005722">
    <property type="entry name" value="ATP_synth_F1_bsu"/>
</dbReference>
<dbReference type="InterPro" id="IPR020003">
    <property type="entry name" value="ATPase_a/bsu_AS"/>
</dbReference>
<dbReference type="InterPro" id="IPR050053">
    <property type="entry name" value="ATPase_alpha/beta_chains"/>
</dbReference>
<dbReference type="InterPro" id="IPR004100">
    <property type="entry name" value="ATPase_F1/V1/A1_a/bsu_N"/>
</dbReference>
<dbReference type="InterPro" id="IPR036121">
    <property type="entry name" value="ATPase_F1/V1/A1_a/bsu_N_sf"/>
</dbReference>
<dbReference type="InterPro" id="IPR000194">
    <property type="entry name" value="ATPase_F1/V1/A1_a/bsu_nucl-bd"/>
</dbReference>
<dbReference type="InterPro" id="IPR024034">
    <property type="entry name" value="ATPase_F1/V1_b/a_C"/>
</dbReference>
<dbReference type="InterPro" id="IPR027417">
    <property type="entry name" value="P-loop_NTPase"/>
</dbReference>
<dbReference type="NCBIfam" id="TIGR01039">
    <property type="entry name" value="atpD"/>
    <property type="match status" value="1"/>
</dbReference>
<dbReference type="PANTHER" id="PTHR15184">
    <property type="entry name" value="ATP SYNTHASE"/>
    <property type="match status" value="1"/>
</dbReference>
<dbReference type="PANTHER" id="PTHR15184:SF71">
    <property type="entry name" value="ATP SYNTHASE SUBUNIT BETA, MITOCHONDRIAL"/>
    <property type="match status" value="1"/>
</dbReference>
<dbReference type="Pfam" id="PF00006">
    <property type="entry name" value="ATP-synt_ab"/>
    <property type="match status" value="1"/>
</dbReference>
<dbReference type="Pfam" id="PF02874">
    <property type="entry name" value="ATP-synt_ab_N"/>
    <property type="match status" value="1"/>
</dbReference>
<dbReference type="Pfam" id="PF22919">
    <property type="entry name" value="ATP-synt_VA_C"/>
    <property type="match status" value="1"/>
</dbReference>
<dbReference type="SMART" id="SM00382">
    <property type="entry name" value="AAA"/>
    <property type="match status" value="1"/>
</dbReference>
<dbReference type="SUPFAM" id="SSF47917">
    <property type="entry name" value="C-terminal domain of alpha and beta subunits of F1 ATP synthase"/>
    <property type="match status" value="1"/>
</dbReference>
<dbReference type="SUPFAM" id="SSF50615">
    <property type="entry name" value="N-terminal domain of alpha and beta subunits of F1 ATP synthase"/>
    <property type="match status" value="1"/>
</dbReference>
<dbReference type="SUPFAM" id="SSF52540">
    <property type="entry name" value="P-loop containing nucleoside triphosphate hydrolases"/>
    <property type="match status" value="1"/>
</dbReference>
<dbReference type="PROSITE" id="PS00152">
    <property type="entry name" value="ATPASE_ALPHA_BETA"/>
    <property type="match status" value="1"/>
</dbReference>
<sequence length="457" mass="49776">MATGKIVQIIGAVIDVEFPQDAVPKVYDALNVETGLVLEVQQQLGGGVVRCIAMGSSDGLKRGLSVTNTNNPISVPVGTKTLGRIMNVLGEPIDEQGEIGAEENWSIHRAPPSYEEQSNSTELLETGIKVIDLVCPFAKGGKVGLFGGAGVGKTVNMMELIRNIAIEHSGYSVFAGVGERTREGNDFYHEMKDSNVLDKVSLVYGQMNEPPGNRLRVALTGLTMAEKFRDEGRDVLFFVDNIYRYTLAGTEVSALLGRMPSAVGYQPTLAEEMGVLQERITSTKTGSITSVQAVYVPADDLTDPSPATTFAHLDSTVVLSRQIASLGIYPAVDPLESTSRQLDPLVVGEEHYNVARGVQTTLQRYKELKDIIAILGMDELSEEDKLVVARARKIERFLSQPFFVAEVFNGTPGKYVPLKETIRGFKGILDGEYDHIPEQAFYMAGTIDEVLEKAKKL</sequence>
<organism>
    <name type="scientific">Pasteurella multocida (strain Pm70)</name>
    <dbReference type="NCBI Taxonomy" id="272843"/>
    <lineage>
        <taxon>Bacteria</taxon>
        <taxon>Pseudomonadati</taxon>
        <taxon>Pseudomonadota</taxon>
        <taxon>Gammaproteobacteria</taxon>
        <taxon>Pasteurellales</taxon>
        <taxon>Pasteurellaceae</taxon>
        <taxon>Pasteurella</taxon>
    </lineage>
</organism>
<protein>
    <recommendedName>
        <fullName evidence="1">ATP synthase subunit beta</fullName>
        <ecNumber evidence="1">7.1.2.2</ecNumber>
    </recommendedName>
    <alternativeName>
        <fullName evidence="1">ATP synthase F1 sector subunit beta</fullName>
    </alternativeName>
    <alternativeName>
        <fullName evidence="1">F-ATPase subunit beta</fullName>
    </alternativeName>
</protein>
<accession>Q9CKW1</accession>
<reference key="1">
    <citation type="journal article" date="2001" name="Proc. Natl. Acad. Sci. U.S.A.">
        <title>Complete genomic sequence of Pasteurella multocida Pm70.</title>
        <authorList>
            <person name="May B.J."/>
            <person name="Zhang Q."/>
            <person name="Li L.L."/>
            <person name="Paustian M.L."/>
            <person name="Whittam T.S."/>
            <person name="Kapur V."/>
        </authorList>
    </citation>
    <scope>NUCLEOTIDE SEQUENCE [LARGE SCALE GENOMIC DNA]</scope>
    <source>
        <strain>Pm70</strain>
    </source>
</reference>
<name>ATPB_PASMU</name>
<comment type="function">
    <text evidence="1">Produces ATP from ADP in the presence of a proton gradient across the membrane. The catalytic sites are hosted primarily by the beta subunits.</text>
</comment>
<comment type="catalytic activity">
    <reaction evidence="1">
        <text>ATP + H2O + 4 H(+)(in) = ADP + phosphate + 5 H(+)(out)</text>
        <dbReference type="Rhea" id="RHEA:57720"/>
        <dbReference type="ChEBI" id="CHEBI:15377"/>
        <dbReference type="ChEBI" id="CHEBI:15378"/>
        <dbReference type="ChEBI" id="CHEBI:30616"/>
        <dbReference type="ChEBI" id="CHEBI:43474"/>
        <dbReference type="ChEBI" id="CHEBI:456216"/>
        <dbReference type="EC" id="7.1.2.2"/>
    </reaction>
</comment>
<comment type="subunit">
    <text evidence="1">F-type ATPases have 2 components, CF(1) - the catalytic core - and CF(0) - the membrane proton channel. CF(1) has five subunits: alpha(3), beta(3), gamma(1), delta(1), epsilon(1). CF(0) has three main subunits: a(1), b(2) and c(9-12). The alpha and beta chains form an alternating ring which encloses part of the gamma chain. CF(1) is attached to CF(0) by a central stalk formed by the gamma and epsilon chains, while a peripheral stalk is formed by the delta and b chains.</text>
</comment>
<comment type="subcellular location">
    <subcellularLocation>
        <location evidence="1">Cell inner membrane</location>
        <topology evidence="1">Peripheral membrane protein</topology>
    </subcellularLocation>
</comment>
<comment type="similarity">
    <text evidence="1">Belongs to the ATPase alpha/beta chains family.</text>
</comment>
<gene>
    <name evidence="1" type="primary">atpD</name>
    <name type="ordered locus">PM1494</name>
</gene>
<feature type="chain" id="PRO_0000144457" description="ATP synthase subunit beta">
    <location>
        <begin position="1"/>
        <end position="457"/>
    </location>
</feature>
<feature type="binding site" evidence="1">
    <location>
        <begin position="147"/>
        <end position="154"/>
    </location>
    <ligand>
        <name>ATP</name>
        <dbReference type="ChEBI" id="CHEBI:30616"/>
    </ligand>
</feature>
<keyword id="KW-0066">ATP synthesis</keyword>
<keyword id="KW-0067">ATP-binding</keyword>
<keyword id="KW-0997">Cell inner membrane</keyword>
<keyword id="KW-1003">Cell membrane</keyword>
<keyword id="KW-0139">CF(1)</keyword>
<keyword id="KW-0375">Hydrogen ion transport</keyword>
<keyword id="KW-0406">Ion transport</keyword>
<keyword id="KW-0472">Membrane</keyword>
<keyword id="KW-0547">Nucleotide-binding</keyword>
<keyword id="KW-1185">Reference proteome</keyword>
<keyword id="KW-1278">Translocase</keyword>
<keyword id="KW-0813">Transport</keyword>